<proteinExistence type="inferred from homology"/>
<reference key="1">
    <citation type="journal article" date="1983" name="Nature">
        <title>Nucleotide sequence of cassava latent virus DNA.</title>
        <authorList>
            <person name="Stanley J."/>
            <person name="Gay M.R."/>
        </authorList>
    </citation>
    <scope>NUCLEOTIDE SEQUENCE [GENOMIC DNA]</scope>
</reference>
<evidence type="ECO:0000250" key="1"/>
<evidence type="ECO:0000305" key="2"/>
<name>NSP_CLVK</name>
<organismHost>
    <name type="scientific">Hewittia sublobata</name>
    <dbReference type="NCBI Taxonomy" id="197394"/>
</organismHost>
<organismHost>
    <name type="scientific">Jatropha multifida</name>
    <name type="common">Coralbush</name>
    <dbReference type="NCBI Taxonomy" id="3996"/>
</organismHost>
<organismHost>
    <name type="scientific">Laportea</name>
    <dbReference type="NCBI Taxonomy" id="194268"/>
</organismHost>
<organismHost>
    <name type="scientific">Manihot esculenta</name>
    <name type="common">Cassava</name>
    <name type="synonym">Jatropha manihot</name>
    <dbReference type="NCBI Taxonomy" id="3983"/>
</organismHost>
<protein>
    <recommendedName>
        <fullName>Nuclear shuttle protein</fullName>
        <shortName>NSP</shortName>
    </recommendedName>
    <alternativeName>
        <fullName>Protein BR1</fullName>
    </alternativeName>
    <alternativeName>
        <fullName>Protein BV1</fullName>
    </alternativeName>
</protein>
<feature type="chain" id="PRO_0000222262" description="Nuclear shuttle protein">
    <location>
        <begin position="1"/>
        <end position="256"/>
    </location>
</feature>
<feature type="region of interest" description="Interaction with Arabidopsis thaliana NSI protein" evidence="1">
    <location>
        <begin position="150"/>
        <end position="187"/>
    </location>
</feature>
<feature type="short sequence motif" description="Bipartite nuclear localization signal" evidence="1">
    <location>
        <begin position="18"/>
        <end position="39"/>
    </location>
</feature>
<feature type="short sequence motif" description="Nuclear localization signal" evidence="1">
    <location>
        <begin position="81"/>
        <end position="96"/>
    </location>
</feature>
<dbReference type="EMBL" id="J02058">
    <property type="status" value="NOT_ANNOTATED_CDS"/>
    <property type="molecule type" value="Genomic_DNA"/>
</dbReference>
<dbReference type="PIR" id="A04168">
    <property type="entry name" value="QQOMC2"/>
</dbReference>
<dbReference type="Proteomes" id="UP000008452">
    <property type="component" value="Genome"/>
</dbReference>
<dbReference type="GO" id="GO:0043657">
    <property type="term" value="C:host cell"/>
    <property type="evidence" value="ECO:0007669"/>
    <property type="project" value="InterPro"/>
</dbReference>
<dbReference type="GO" id="GO:0030430">
    <property type="term" value="C:host cell cytoplasm"/>
    <property type="evidence" value="ECO:0007669"/>
    <property type="project" value="UniProtKB-SubCell"/>
</dbReference>
<dbReference type="GO" id="GO:0042025">
    <property type="term" value="C:host cell nucleus"/>
    <property type="evidence" value="ECO:0007669"/>
    <property type="project" value="UniProtKB-SubCell"/>
</dbReference>
<dbReference type="GO" id="GO:0020002">
    <property type="term" value="C:host cell plasma membrane"/>
    <property type="evidence" value="ECO:0007669"/>
    <property type="project" value="UniProtKB-SubCell"/>
</dbReference>
<dbReference type="GO" id="GO:0016020">
    <property type="term" value="C:membrane"/>
    <property type="evidence" value="ECO:0007669"/>
    <property type="project" value="UniProtKB-KW"/>
</dbReference>
<dbReference type="GO" id="GO:0019028">
    <property type="term" value="C:viral capsid"/>
    <property type="evidence" value="ECO:0007669"/>
    <property type="project" value="InterPro"/>
</dbReference>
<dbReference type="GO" id="GO:0003697">
    <property type="term" value="F:single-stranded DNA binding"/>
    <property type="evidence" value="ECO:0007669"/>
    <property type="project" value="InterPro"/>
</dbReference>
<dbReference type="GO" id="GO:0005198">
    <property type="term" value="F:structural molecule activity"/>
    <property type="evidence" value="ECO:0007669"/>
    <property type="project" value="InterPro"/>
</dbReference>
<dbReference type="GO" id="GO:0051027">
    <property type="term" value="P:DNA transport"/>
    <property type="evidence" value="ECO:0007669"/>
    <property type="project" value="InterPro"/>
</dbReference>
<dbReference type="GO" id="GO:0046740">
    <property type="term" value="P:transport of virus in host, cell to cell"/>
    <property type="evidence" value="ECO:0007669"/>
    <property type="project" value="UniProtKB-KW"/>
</dbReference>
<dbReference type="Gene3D" id="2.60.120.20">
    <property type="match status" value="1"/>
</dbReference>
<dbReference type="InterPro" id="IPR001530">
    <property type="entry name" value="Gemini_BR1"/>
</dbReference>
<dbReference type="InterPro" id="IPR000263">
    <property type="entry name" value="GV_A/BR1_coat"/>
</dbReference>
<dbReference type="InterPro" id="IPR029053">
    <property type="entry name" value="Viral_coat"/>
</dbReference>
<dbReference type="Pfam" id="PF00844">
    <property type="entry name" value="Gemini_coat"/>
    <property type="match status" value="1"/>
</dbReference>
<dbReference type="PRINTS" id="PR00225">
    <property type="entry name" value="GEMCOATBR1"/>
</dbReference>
<sequence>MYSIRKQSRNLQRKWNSNITNRYPIKRKYVAGHTRPCVRRRLLYEPVERPFGHNVLCEKQHGDVFNLQQNTSYTSFVTYPSRGPSGDGRSRDYIKLQSMSVSGVIHAKANGNDDPMEVSPVVNGVFVFSLIMDTKPYLPAGVQGLPTFEELFGPYSACYVNLRLLNNQQHRYRVLHSVKRFVSSSGDTKVSQFRFNKRLSTRRYTIWASFHDGDLVNAGGNYRNISKNAILVSYAFVSEHAMSCKPFVQIETSYVG</sequence>
<organism>
    <name type="scientific">African cassava mosaic virus (isolate West Kenyan 844)</name>
    <name type="common">ACMV</name>
    <name type="synonym">Cassava latent virus (isolate West Kenyan 844)</name>
    <dbReference type="NCBI Taxonomy" id="10818"/>
    <lineage>
        <taxon>Viruses</taxon>
        <taxon>Monodnaviria</taxon>
        <taxon>Shotokuvirae</taxon>
        <taxon>Cressdnaviricota</taxon>
        <taxon>Repensiviricetes</taxon>
        <taxon>Geplafuvirales</taxon>
        <taxon>Geminiviridae</taxon>
        <taxon>Begomovirus</taxon>
        <taxon>Begomovirus manihotis</taxon>
    </lineage>
</organism>
<accession>P03565</accession>
<gene>
    <name type="ORF">BR1</name>
    <name type="ORF">BV1</name>
</gene>
<comment type="function">
    <text evidence="1">Binds to the genomic viral ssDNA, shuttles it into and out of the cell nucleus. Begomoviruses use 2 proteins to transport their DNA from cell to cell. The nuclear shuttle protein (NSP) shuttles it between nucleus and cytoplasm and the movement protein (MP) probably transports the DNA-NSP complex to the cell periphery and facilitates movement across the cell wall (By similarity).</text>
</comment>
<comment type="subunit">
    <text evidence="1">Binds to single-stranded and double-stranded viral DNA. Interacts with the host nuclear shuttle interacting (NSI) protein. This interaction may allow NSP to recruit NSI monomers to the viral genome and thus regulate nuclear export of viral genome by NSP (By similarity).</text>
</comment>
<comment type="subcellular location">
    <subcellularLocation>
        <location evidence="1">Host nucleus</location>
    </subcellularLocation>
    <subcellularLocation>
        <location evidence="1">Host cytoplasm</location>
    </subcellularLocation>
    <subcellularLocation>
        <location evidence="1">Host cell membrane</location>
        <topology evidence="1">Peripheral membrane protein</topology>
        <orientation evidence="1">Cytoplasmic side</orientation>
    </subcellularLocation>
    <text evidence="1">Translocated to the plasma membrane by the movement protein BC1.</text>
</comment>
<comment type="similarity">
    <text evidence="2">Belongs to the begomovirus nuclear shuttle protein family.</text>
</comment>
<keyword id="KW-0238">DNA-binding</keyword>
<keyword id="KW-1032">Host cell membrane</keyword>
<keyword id="KW-1035">Host cytoplasm</keyword>
<keyword id="KW-1043">Host membrane</keyword>
<keyword id="KW-1048">Host nucleus</keyword>
<keyword id="KW-0945">Host-virus interaction</keyword>
<keyword id="KW-0472">Membrane</keyword>
<keyword id="KW-0813">Transport</keyword>
<keyword id="KW-0916">Viral movement protein</keyword>